<comment type="function">
    <text evidence="1">Binds as a heterodimer with protein bS6 to the central domain of the 16S rRNA, where it helps stabilize the platform of the 30S subunit.</text>
</comment>
<comment type="subunit">
    <text evidence="1">Part of the 30S ribosomal subunit. Forms a tight heterodimer with protein bS6.</text>
</comment>
<comment type="similarity">
    <text evidence="1">Belongs to the bacterial ribosomal protein bS18 family.</text>
</comment>
<sequence length="88" mass="10005">MAKSSSTKRRPAPEKPVKTRKCVFCSKKGKNQVIDYKDTQLLRTYISERGKIRARRVTGNCVQHQRDIAIAVKNAREVALLPFSSSTR</sequence>
<gene>
    <name evidence="1" type="primary">rpsR1</name>
    <name type="ordered locus">Mflv_0876</name>
</gene>
<organism>
    <name type="scientific">Mycolicibacterium gilvum (strain PYR-GCK)</name>
    <name type="common">Mycobacterium gilvum (strain PYR-GCK)</name>
    <dbReference type="NCBI Taxonomy" id="350054"/>
    <lineage>
        <taxon>Bacteria</taxon>
        <taxon>Bacillati</taxon>
        <taxon>Actinomycetota</taxon>
        <taxon>Actinomycetes</taxon>
        <taxon>Mycobacteriales</taxon>
        <taxon>Mycobacteriaceae</taxon>
        <taxon>Mycolicibacterium</taxon>
    </lineage>
</organism>
<reference key="1">
    <citation type="submission" date="2007-04" db="EMBL/GenBank/DDBJ databases">
        <title>Complete sequence of chromosome of Mycobacterium gilvum PYR-GCK.</title>
        <authorList>
            <consortium name="US DOE Joint Genome Institute"/>
            <person name="Copeland A."/>
            <person name="Lucas S."/>
            <person name="Lapidus A."/>
            <person name="Barry K."/>
            <person name="Detter J.C."/>
            <person name="Glavina del Rio T."/>
            <person name="Hammon N."/>
            <person name="Israni S."/>
            <person name="Dalin E."/>
            <person name="Tice H."/>
            <person name="Pitluck S."/>
            <person name="Chain P."/>
            <person name="Malfatti S."/>
            <person name="Shin M."/>
            <person name="Vergez L."/>
            <person name="Schmutz J."/>
            <person name="Larimer F."/>
            <person name="Land M."/>
            <person name="Hauser L."/>
            <person name="Kyrpides N."/>
            <person name="Mikhailova N."/>
            <person name="Miller C."/>
            <person name="Richardson P."/>
        </authorList>
    </citation>
    <scope>NUCLEOTIDE SEQUENCE [LARGE SCALE GENOMIC DNA]</scope>
    <source>
        <strain>PYR-GCK</strain>
    </source>
</reference>
<proteinExistence type="inferred from homology"/>
<keyword id="KW-0687">Ribonucleoprotein</keyword>
<keyword id="KW-0689">Ribosomal protein</keyword>
<keyword id="KW-0694">RNA-binding</keyword>
<keyword id="KW-0699">rRNA-binding</keyword>
<feature type="chain" id="PRO_0000345500" description="Small ribosomal subunit protein bS18A">
    <location>
        <begin position="1"/>
        <end position="88"/>
    </location>
</feature>
<protein>
    <recommendedName>
        <fullName evidence="1">Small ribosomal subunit protein bS18A</fullName>
    </recommendedName>
    <alternativeName>
        <fullName evidence="2">30S ribosomal protein S18 1</fullName>
    </alternativeName>
</protein>
<accession>A4T4N9</accession>
<name>RS181_MYCGI</name>
<evidence type="ECO:0000255" key="1">
    <source>
        <dbReference type="HAMAP-Rule" id="MF_00270"/>
    </source>
</evidence>
<evidence type="ECO:0000305" key="2"/>
<dbReference type="EMBL" id="CP000656">
    <property type="protein sequence ID" value="ABP43360.1"/>
    <property type="molecule type" value="Genomic_DNA"/>
</dbReference>
<dbReference type="SMR" id="A4T4N9"/>
<dbReference type="STRING" id="350054.Mflv_0876"/>
<dbReference type="KEGG" id="mgi:Mflv_0876"/>
<dbReference type="eggNOG" id="COG0238">
    <property type="taxonomic scope" value="Bacteria"/>
</dbReference>
<dbReference type="HOGENOM" id="CLU_148710_2_2_11"/>
<dbReference type="OrthoDB" id="9812008at2"/>
<dbReference type="GO" id="GO:0022627">
    <property type="term" value="C:cytosolic small ribosomal subunit"/>
    <property type="evidence" value="ECO:0007669"/>
    <property type="project" value="TreeGrafter"/>
</dbReference>
<dbReference type="GO" id="GO:0070181">
    <property type="term" value="F:small ribosomal subunit rRNA binding"/>
    <property type="evidence" value="ECO:0007669"/>
    <property type="project" value="TreeGrafter"/>
</dbReference>
<dbReference type="GO" id="GO:0003735">
    <property type="term" value="F:structural constituent of ribosome"/>
    <property type="evidence" value="ECO:0007669"/>
    <property type="project" value="InterPro"/>
</dbReference>
<dbReference type="GO" id="GO:0006412">
    <property type="term" value="P:translation"/>
    <property type="evidence" value="ECO:0007669"/>
    <property type="project" value="UniProtKB-UniRule"/>
</dbReference>
<dbReference type="FunFam" id="4.10.640.10:FF:000004">
    <property type="entry name" value="30S ribosomal protein S18"/>
    <property type="match status" value="1"/>
</dbReference>
<dbReference type="Gene3D" id="4.10.640.10">
    <property type="entry name" value="Ribosomal protein S18"/>
    <property type="match status" value="1"/>
</dbReference>
<dbReference type="HAMAP" id="MF_00270">
    <property type="entry name" value="Ribosomal_bS18"/>
    <property type="match status" value="1"/>
</dbReference>
<dbReference type="InterPro" id="IPR001648">
    <property type="entry name" value="Ribosomal_bS18"/>
</dbReference>
<dbReference type="InterPro" id="IPR018275">
    <property type="entry name" value="Ribosomal_bS18_CS"/>
</dbReference>
<dbReference type="InterPro" id="IPR036870">
    <property type="entry name" value="Ribosomal_bS18_sf"/>
</dbReference>
<dbReference type="NCBIfam" id="TIGR00165">
    <property type="entry name" value="S18"/>
    <property type="match status" value="1"/>
</dbReference>
<dbReference type="PANTHER" id="PTHR13479">
    <property type="entry name" value="30S RIBOSOMAL PROTEIN S18"/>
    <property type="match status" value="1"/>
</dbReference>
<dbReference type="PANTHER" id="PTHR13479:SF62">
    <property type="entry name" value="SMALL RIBOSOMAL SUBUNIT PROTEIN BS18A"/>
    <property type="match status" value="1"/>
</dbReference>
<dbReference type="Pfam" id="PF01084">
    <property type="entry name" value="Ribosomal_S18"/>
    <property type="match status" value="1"/>
</dbReference>
<dbReference type="PRINTS" id="PR00974">
    <property type="entry name" value="RIBOSOMALS18"/>
</dbReference>
<dbReference type="SUPFAM" id="SSF46911">
    <property type="entry name" value="Ribosomal protein S18"/>
    <property type="match status" value="1"/>
</dbReference>
<dbReference type="PROSITE" id="PS00057">
    <property type="entry name" value="RIBOSOMAL_S18"/>
    <property type="match status" value="1"/>
</dbReference>